<reference key="1">
    <citation type="journal article" date="2000" name="Nature">
        <title>Sequence and analysis of chromosome 1 of the plant Arabidopsis thaliana.</title>
        <authorList>
            <person name="Theologis A."/>
            <person name="Ecker J.R."/>
            <person name="Palm C.J."/>
            <person name="Federspiel N.A."/>
            <person name="Kaul S."/>
            <person name="White O."/>
            <person name="Alonso J."/>
            <person name="Altafi H."/>
            <person name="Araujo R."/>
            <person name="Bowman C.L."/>
            <person name="Brooks S.Y."/>
            <person name="Buehler E."/>
            <person name="Chan A."/>
            <person name="Chao Q."/>
            <person name="Chen H."/>
            <person name="Cheuk R.F."/>
            <person name="Chin C.W."/>
            <person name="Chung M.K."/>
            <person name="Conn L."/>
            <person name="Conway A.B."/>
            <person name="Conway A.R."/>
            <person name="Creasy T.H."/>
            <person name="Dewar K."/>
            <person name="Dunn P."/>
            <person name="Etgu P."/>
            <person name="Feldblyum T.V."/>
            <person name="Feng J.-D."/>
            <person name="Fong B."/>
            <person name="Fujii C.Y."/>
            <person name="Gill J.E."/>
            <person name="Goldsmith A.D."/>
            <person name="Haas B."/>
            <person name="Hansen N.F."/>
            <person name="Hughes B."/>
            <person name="Huizar L."/>
            <person name="Hunter J.L."/>
            <person name="Jenkins J."/>
            <person name="Johnson-Hopson C."/>
            <person name="Khan S."/>
            <person name="Khaykin E."/>
            <person name="Kim C.J."/>
            <person name="Koo H.L."/>
            <person name="Kremenetskaia I."/>
            <person name="Kurtz D.B."/>
            <person name="Kwan A."/>
            <person name="Lam B."/>
            <person name="Langin-Hooper S."/>
            <person name="Lee A."/>
            <person name="Lee J.M."/>
            <person name="Lenz C.A."/>
            <person name="Li J.H."/>
            <person name="Li Y.-P."/>
            <person name="Lin X."/>
            <person name="Liu S.X."/>
            <person name="Liu Z.A."/>
            <person name="Luros J.S."/>
            <person name="Maiti R."/>
            <person name="Marziali A."/>
            <person name="Militscher J."/>
            <person name="Miranda M."/>
            <person name="Nguyen M."/>
            <person name="Nierman W.C."/>
            <person name="Osborne B.I."/>
            <person name="Pai G."/>
            <person name="Peterson J."/>
            <person name="Pham P.K."/>
            <person name="Rizzo M."/>
            <person name="Rooney T."/>
            <person name="Rowley D."/>
            <person name="Sakano H."/>
            <person name="Salzberg S.L."/>
            <person name="Schwartz J.R."/>
            <person name="Shinn P."/>
            <person name="Southwick A.M."/>
            <person name="Sun H."/>
            <person name="Tallon L.J."/>
            <person name="Tambunga G."/>
            <person name="Toriumi M.J."/>
            <person name="Town C.D."/>
            <person name="Utterback T."/>
            <person name="Van Aken S."/>
            <person name="Vaysberg M."/>
            <person name="Vysotskaia V.S."/>
            <person name="Walker M."/>
            <person name="Wu D."/>
            <person name="Yu G."/>
            <person name="Fraser C.M."/>
            <person name="Venter J.C."/>
            <person name="Davis R.W."/>
        </authorList>
    </citation>
    <scope>NUCLEOTIDE SEQUENCE [LARGE SCALE GENOMIC DNA]</scope>
    <source>
        <strain>cv. Columbia</strain>
    </source>
</reference>
<reference key="2">
    <citation type="journal article" date="2017" name="Plant J.">
        <title>Araport11: a complete reannotation of the Arabidopsis thaliana reference genome.</title>
        <authorList>
            <person name="Cheng C.Y."/>
            <person name="Krishnakumar V."/>
            <person name="Chan A.P."/>
            <person name="Thibaud-Nissen F."/>
            <person name="Schobel S."/>
            <person name="Town C.D."/>
        </authorList>
    </citation>
    <scope>GENOME REANNOTATION</scope>
    <source>
        <strain>cv. Columbia</strain>
    </source>
</reference>
<reference key="3">
    <citation type="journal article" date="2003" name="Science">
        <title>Empirical analysis of transcriptional activity in the Arabidopsis genome.</title>
        <authorList>
            <person name="Yamada K."/>
            <person name="Lim J."/>
            <person name="Dale J.M."/>
            <person name="Chen H."/>
            <person name="Shinn P."/>
            <person name="Palm C.J."/>
            <person name="Southwick A.M."/>
            <person name="Wu H.C."/>
            <person name="Kim C.J."/>
            <person name="Nguyen M."/>
            <person name="Pham P.K."/>
            <person name="Cheuk R.F."/>
            <person name="Karlin-Newmann G."/>
            <person name="Liu S.X."/>
            <person name="Lam B."/>
            <person name="Sakano H."/>
            <person name="Wu T."/>
            <person name="Yu G."/>
            <person name="Miranda M."/>
            <person name="Quach H.L."/>
            <person name="Tripp M."/>
            <person name="Chang C.H."/>
            <person name="Lee J.M."/>
            <person name="Toriumi M.J."/>
            <person name="Chan M.M."/>
            <person name="Tang C.C."/>
            <person name="Onodera C.S."/>
            <person name="Deng J.M."/>
            <person name="Akiyama K."/>
            <person name="Ansari Y."/>
            <person name="Arakawa T."/>
            <person name="Banh J."/>
            <person name="Banno F."/>
            <person name="Bowser L."/>
            <person name="Brooks S.Y."/>
            <person name="Carninci P."/>
            <person name="Chao Q."/>
            <person name="Choy N."/>
            <person name="Enju A."/>
            <person name="Goldsmith A.D."/>
            <person name="Gurjal M."/>
            <person name="Hansen N.F."/>
            <person name="Hayashizaki Y."/>
            <person name="Johnson-Hopson C."/>
            <person name="Hsuan V.W."/>
            <person name="Iida K."/>
            <person name="Karnes M."/>
            <person name="Khan S."/>
            <person name="Koesema E."/>
            <person name="Ishida J."/>
            <person name="Jiang P.X."/>
            <person name="Jones T."/>
            <person name="Kawai J."/>
            <person name="Kamiya A."/>
            <person name="Meyers C."/>
            <person name="Nakajima M."/>
            <person name="Narusaka M."/>
            <person name="Seki M."/>
            <person name="Sakurai T."/>
            <person name="Satou M."/>
            <person name="Tamse R."/>
            <person name="Vaysberg M."/>
            <person name="Wallender E.K."/>
            <person name="Wong C."/>
            <person name="Yamamura Y."/>
            <person name="Yuan S."/>
            <person name="Shinozaki K."/>
            <person name="Davis R.W."/>
            <person name="Theologis A."/>
            <person name="Ecker J.R."/>
        </authorList>
    </citation>
    <scope>NUCLEOTIDE SEQUENCE [LARGE SCALE MRNA]</scope>
    <source>
        <strain>cv. Columbia</strain>
    </source>
</reference>
<reference key="4">
    <citation type="journal article" date="2010" name="Plant Cell">
        <title>The cytoskeleton and the peroxisomal-targeted snowy cotyledon3 protein are required for chloroplast development in Arabidopsis.</title>
        <authorList>
            <person name="Albrecht V."/>
            <person name="Simkova K."/>
            <person name="Carrie C."/>
            <person name="Delannoy E."/>
            <person name="Giraud E."/>
            <person name="Whelan J."/>
            <person name="Small I.D."/>
            <person name="Apel K."/>
            <person name="Badger M.R."/>
            <person name="Pogson B.J."/>
        </authorList>
    </citation>
    <scope>GENE FAMILY</scope>
    <scope>NOMENCLATURE</scope>
</reference>
<evidence type="ECO:0000256" key="1">
    <source>
        <dbReference type="SAM" id="MobiDB-lite"/>
    </source>
</evidence>
<evidence type="ECO:0000305" key="2"/>
<feature type="chain" id="PRO_0000423623" description="QWRF motif-containing protein 2">
    <location>
        <begin position="1"/>
        <end position="659"/>
    </location>
</feature>
<feature type="region of interest" description="Disordered" evidence="1">
    <location>
        <begin position="1"/>
        <end position="125"/>
    </location>
</feature>
<feature type="region of interest" description="Disordered" evidence="1">
    <location>
        <begin position="157"/>
        <end position="221"/>
    </location>
</feature>
<feature type="region of interest" description="Disordered" evidence="1">
    <location>
        <begin position="291"/>
        <end position="317"/>
    </location>
</feature>
<feature type="region of interest" description="Disordered" evidence="1">
    <location>
        <begin position="340"/>
        <end position="359"/>
    </location>
</feature>
<feature type="region of interest" description="Disordered" evidence="1">
    <location>
        <begin position="371"/>
        <end position="429"/>
    </location>
</feature>
<feature type="short sequence motif" description="QWRF motif">
    <location>
        <begin position="468"/>
        <end position="471"/>
    </location>
</feature>
<feature type="compositionally biased region" description="Low complexity" evidence="1">
    <location>
        <begin position="42"/>
        <end position="72"/>
    </location>
</feature>
<feature type="compositionally biased region" description="Polar residues" evidence="1">
    <location>
        <begin position="90"/>
        <end position="102"/>
    </location>
</feature>
<feature type="compositionally biased region" description="Basic and acidic residues" evidence="1">
    <location>
        <begin position="172"/>
        <end position="190"/>
    </location>
</feature>
<feature type="compositionally biased region" description="Polar residues" evidence="1">
    <location>
        <begin position="206"/>
        <end position="216"/>
    </location>
</feature>
<feature type="compositionally biased region" description="Polar residues" evidence="1">
    <location>
        <begin position="291"/>
        <end position="303"/>
    </location>
</feature>
<feature type="compositionally biased region" description="Low complexity" evidence="1">
    <location>
        <begin position="345"/>
        <end position="359"/>
    </location>
</feature>
<feature type="compositionally biased region" description="Low complexity" evidence="1">
    <location>
        <begin position="401"/>
        <end position="418"/>
    </location>
</feature>
<accession>Q94AI1</accession>
<accession>Q9C6C5</accession>
<accession>Q9C700</accession>
<dbReference type="EMBL" id="AC074110">
    <property type="protein sequence ID" value="AAG60167.1"/>
    <property type="status" value="ALT_SEQ"/>
    <property type="molecule type" value="Genomic_DNA"/>
</dbReference>
<dbReference type="EMBL" id="AC079674">
    <property type="protein sequence ID" value="AAG51768.1"/>
    <property type="status" value="ALT_SEQ"/>
    <property type="molecule type" value="Genomic_DNA"/>
</dbReference>
<dbReference type="EMBL" id="CP002684">
    <property type="protein sequence ID" value="AEE32488.1"/>
    <property type="molecule type" value="Genomic_DNA"/>
</dbReference>
<dbReference type="EMBL" id="AY046022">
    <property type="protein sequence ID" value="AAK76696.1"/>
    <property type="molecule type" value="mRNA"/>
</dbReference>
<dbReference type="EMBL" id="BT000999">
    <property type="protein sequence ID" value="AAN41399.1"/>
    <property type="molecule type" value="mRNA"/>
</dbReference>
<dbReference type="RefSeq" id="NP_564558.1">
    <property type="nucleotide sequence ID" value="NM_103876.3"/>
</dbReference>
<dbReference type="SMR" id="Q94AI1"/>
<dbReference type="FunCoup" id="Q94AI1">
    <property type="interactions" value="2244"/>
</dbReference>
<dbReference type="STRING" id="3702.Q94AI1"/>
<dbReference type="GlyGen" id="Q94AI1">
    <property type="glycosylation" value="1 site"/>
</dbReference>
<dbReference type="iPTMnet" id="Q94AI1"/>
<dbReference type="PaxDb" id="3702-AT1G49890.1"/>
<dbReference type="ProteomicsDB" id="236618"/>
<dbReference type="EnsemblPlants" id="AT1G49890.1">
    <property type="protein sequence ID" value="AT1G49890.1"/>
    <property type="gene ID" value="AT1G49890"/>
</dbReference>
<dbReference type="GeneID" id="841412"/>
<dbReference type="Gramene" id="AT1G49890.1">
    <property type="protein sequence ID" value="AT1G49890.1"/>
    <property type="gene ID" value="AT1G49890"/>
</dbReference>
<dbReference type="KEGG" id="ath:AT1G49890"/>
<dbReference type="Araport" id="AT1G49890"/>
<dbReference type="TAIR" id="AT1G49890">
    <property type="gene designation" value="QWRF2"/>
</dbReference>
<dbReference type="eggNOG" id="ENOG502QYE5">
    <property type="taxonomic scope" value="Eukaryota"/>
</dbReference>
<dbReference type="HOGENOM" id="CLU_025164_2_0_1"/>
<dbReference type="InParanoid" id="Q94AI1"/>
<dbReference type="OMA" id="DQMNAYN"/>
<dbReference type="PhylomeDB" id="Q94AI1"/>
<dbReference type="PRO" id="PR:Q94AI1"/>
<dbReference type="Proteomes" id="UP000006548">
    <property type="component" value="Chromosome 1"/>
</dbReference>
<dbReference type="ExpressionAtlas" id="Q94AI1">
    <property type="expression patterns" value="baseline and differential"/>
</dbReference>
<dbReference type="GO" id="GO:0005874">
    <property type="term" value="C:microtubule"/>
    <property type="evidence" value="ECO:0000314"/>
    <property type="project" value="TAIR"/>
</dbReference>
<dbReference type="InterPro" id="IPR007573">
    <property type="entry name" value="QWRF"/>
</dbReference>
<dbReference type="PANTHER" id="PTHR31807">
    <property type="entry name" value="AUGMIN FAMILY MEMBER"/>
    <property type="match status" value="1"/>
</dbReference>
<dbReference type="PANTHER" id="PTHR31807:SF32">
    <property type="entry name" value="QWRF MOTIF-CONTAINING PROTEIN 2"/>
    <property type="match status" value="1"/>
</dbReference>
<dbReference type="Pfam" id="PF04484">
    <property type="entry name" value="QWRF"/>
    <property type="match status" value="1"/>
</dbReference>
<keyword id="KW-1185">Reference proteome</keyword>
<sequence length="659" mass="71534">MVAAAISTTDPRNPPRDRPQSLTNNGGQRRPRGKQVPSRYLSPSPSHSVSSTTTTTTTTTTTTSSSSSSSSSAILRTSKRYPSPSPLLSRSTTNSASNSIKTPSLLPKRSQSVDRRRPSAVSVTVGTEMSAATKMLITSTRSLSVSFQGEAFSLPISKKKETTSTPVSHRKSTPERRRSTPVRDQRENSKPVDQQRWPGASRRGNSESVVPNSLSRSLDCGSDRGKLGSGFVGRSMLHNSMIDESPRVSVNGRLSLDLGGRDEYLDIGDDIQRRPNNGLTSSVSCDFTASDTDSVSSGSTNGVQECGSGVNGEISKSKSLPRNIMASARFWQETNSRLRRLQDPGSPLSSSPGLKTSSISSKFGLSKRFSSDAVPLSSPRGMASPVRGSAIRSASPSKLWATTTSSPARALSSPSRARNGVSDQMNAYNRNNTPSILSFSADIRRGKIGEDRVMDAHLLRLLYNRDLQWRFVNARADSTVMVQRLNAEKNLWNAWVSISELRHSVTLKRIKLLLLRQKLKLASILRGQMGFLEEWSLLDRDHSSSLSGATESLKASTLRLPIVGKTVVDIQDLKHAVSSAVDVMQAMSSSIFSLTSKVDEMNSVMVETVNVTAKEKVLLERCQGCLSRVAAMQVTDCSMKTHIIQLSRIPITSSLTPQL</sequence>
<proteinExistence type="evidence at transcript level"/>
<organism>
    <name type="scientific">Arabidopsis thaliana</name>
    <name type="common">Mouse-ear cress</name>
    <dbReference type="NCBI Taxonomy" id="3702"/>
    <lineage>
        <taxon>Eukaryota</taxon>
        <taxon>Viridiplantae</taxon>
        <taxon>Streptophyta</taxon>
        <taxon>Embryophyta</taxon>
        <taxon>Tracheophyta</taxon>
        <taxon>Spermatophyta</taxon>
        <taxon>Magnoliopsida</taxon>
        <taxon>eudicotyledons</taxon>
        <taxon>Gunneridae</taxon>
        <taxon>Pentapetalae</taxon>
        <taxon>rosids</taxon>
        <taxon>malvids</taxon>
        <taxon>Brassicales</taxon>
        <taxon>Brassicaceae</taxon>
        <taxon>Camelineae</taxon>
        <taxon>Arabidopsis</taxon>
    </lineage>
</organism>
<gene>
    <name type="primary">QWRF2</name>
    <name type="ordered locus">At1g49890</name>
    <name type="ORF">F10F5.10</name>
    <name type="ORF">T18C15.4</name>
</gene>
<protein>
    <recommendedName>
        <fullName>QWRF motif-containing protein 2</fullName>
    </recommendedName>
</protein>
<comment type="similarity">
    <text evidence="2">Belongs to the QWRF family.</text>
</comment>
<comment type="sequence caution" evidence="2">
    <conflict type="erroneous gene model prediction">
        <sequence resource="EMBL-CDS" id="AAG51768"/>
    </conflict>
</comment>
<comment type="sequence caution" evidence="2">
    <conflict type="erroneous gene model prediction">
        <sequence resource="EMBL-CDS" id="AAG60167"/>
    </conflict>
</comment>
<name>QWRF2_ARATH</name>